<sequence>MEQQKFPNPRIFEDIDATDFSKHNKKHVTEDFVAENFKDVGWRVYRPFNDTGIDLIAKKFVCPDGHTKWNQNLTKEMTCSECGKSLIEITRFIQVKTREVKQVKTREAKGEKFFFGYTLKSKDFRTDPRHVFLLYSDFTMDFIILPMYDYLNLFYTNQSLGSTHFSTPSFRQGNNKLNGLSKDKNDNWVWSGVSFNEFVNEKGMDKLSCPIYDIELESYTKKIQELKFSLFYRYSPGRKNQVSAPTVEFINNHFSIFISLPKEAIASKRKAHLESLRQDLPEDLKKSVNEGYLVKFKGVDL</sequence>
<organism>
    <name type="scientific">Bacillus sp. (strain NEB-606)</name>
    <dbReference type="NCBI Taxonomy" id="114630"/>
    <lineage>
        <taxon>Bacteria</taxon>
        <taxon>Bacillati</taxon>
        <taxon>Bacillota</taxon>
        <taxon>Bacilli</taxon>
        <taxon>Bacillales</taxon>
        <taxon>Bacillaceae</taxon>
        <taxon>Bacillus</taxon>
    </lineage>
</organism>
<accession>Q9LAI0</accession>
<gene>
    <name evidence="3" type="primary">bslIRbeta</name>
</gene>
<keyword id="KW-0903">Direct protein sequencing</keyword>
<keyword id="KW-0255">Endonuclease</keyword>
<keyword id="KW-0378">Hydrolase</keyword>
<keyword id="KW-0479">Metal-binding</keyword>
<keyword id="KW-0540">Nuclease</keyword>
<keyword id="KW-0680">Restriction system</keyword>
<keyword id="KW-0862">Zinc</keyword>
<keyword id="KW-0863">Zinc-finger</keyword>
<evidence type="ECO:0000269" key="1">
    <source>
    </source>
</evidence>
<evidence type="ECO:0000269" key="2">
    <source>
    </source>
</evidence>
<evidence type="ECO:0000303" key="3">
    <source>
    </source>
</evidence>
<evidence type="ECO:0000303" key="4">
    <source>
    </source>
</evidence>
<dbReference type="EC" id="3.1.21.4" evidence="1"/>
<dbReference type="EMBL" id="AF135191">
    <property type="protein sequence ID" value="AAF32531.1"/>
    <property type="molecule type" value="Genomic_DNA"/>
</dbReference>
<dbReference type="REBASE" id="386">
    <property type="entry name" value="BslI"/>
</dbReference>
<dbReference type="PRO" id="PR:Q9LAI0"/>
<dbReference type="GO" id="GO:0009036">
    <property type="term" value="F:type II site-specific deoxyribonuclease activity"/>
    <property type="evidence" value="ECO:0007669"/>
    <property type="project" value="UniProtKB-EC"/>
</dbReference>
<dbReference type="GO" id="GO:0008270">
    <property type="term" value="F:zinc ion binding"/>
    <property type="evidence" value="ECO:0007669"/>
    <property type="project" value="UniProtKB-KW"/>
</dbReference>
<dbReference type="GO" id="GO:0009307">
    <property type="term" value="P:DNA restriction-modification system"/>
    <property type="evidence" value="ECO:0007669"/>
    <property type="project" value="UniProtKB-KW"/>
</dbReference>
<comment type="function">
    <text evidence="1 4">A P subtype restriction enzyme that recognizes the double-stranded sequence 5'-CCN(7)GG-3' and cleaves after N-7.</text>
</comment>
<comment type="catalytic activity">
    <reaction evidence="1">
        <text>Endonucleolytic cleavage of DNA to give specific double-stranded fragments with terminal 5'-phosphates.</text>
        <dbReference type="EC" id="3.1.21.4"/>
    </reaction>
</comment>
<comment type="cofactor">
    <cofactor>
        <name>Zn(2+)</name>
        <dbReference type="ChEBI" id="CHEBI:29105"/>
    </cofactor>
    <text evidence="2">Binds 1 zinc ion per subunit.</text>
</comment>
<comment type="biophysicochemical properties">
    <temperatureDependence>
        <text>Is one of the thermostable restriction enzymes that remain active after 20 to 30 cycles of thermal PCR cycling.</text>
    </temperatureDependence>
</comment>
<comment type="subunit">
    <text evidence="1">Heterotetramer of two alpha and two beta subunits. The alpha subunit is believed to be responsible for DNA recognition, while the beta subunit is thought to mediate cleavage.</text>
</comment>
<comment type="biotechnology">
    <text>Could be used to screen carcinogenic mutations in a restriction endonuclease-mediated selective PCR (or REMS-PCR) assay. In particular, could be used to detect the vast majority of mutations that occur at codons 12 or 13 of the Ras oncogenes that encode glycine (codons GGN) at those positions.</text>
</comment>
<feature type="chain" id="PRO_0000077284" description="Type II restriction enzyme BslI subunit beta">
    <location>
        <begin position="1"/>
        <end position="301"/>
    </location>
</feature>
<feature type="zinc finger region" description="CHC2-type">
    <location>
        <begin position="62"/>
        <end position="82"/>
    </location>
</feature>
<feature type="mutagenesis site" description="Loss of activity." evidence="2">
    <original>C</original>
    <variation>K</variation>
    <location>
        <position position="62"/>
    </location>
</feature>
<feature type="mutagenesis site" description="50% of wild-type activity." evidence="2">
    <original>H</original>
    <variation>K</variation>
    <location>
        <position position="66"/>
    </location>
</feature>
<feature type="mutagenesis site" description="10% of wild-type activity." evidence="2">
    <original>C</original>
    <variation>K</variation>
    <location>
        <position position="79"/>
    </location>
</feature>
<feature type="mutagenesis site" description="10% of wild-type activity." evidence="2">
    <original>C</original>
    <variation>K</variation>
    <location>
        <position position="82"/>
    </location>
</feature>
<name>T2BLB_BACSQ</name>
<reference key="1">
    <citation type="journal article" date="2000" name="J. Bacteriol.">
        <title>Cloning, expression, and purification of a thermostable nonhomodimeric restriction enzyme, BslI.</title>
        <authorList>
            <person name="Hsieh P.-C."/>
            <person name="Xiao J.-P."/>
            <person name="O'Loane D."/>
            <person name="Xu S.-Y."/>
        </authorList>
    </citation>
    <scope>NUCLEOTIDE SEQUENCE [GENOMIC DNA]</scope>
    <scope>PROTEIN SEQUENCE OF N-TERMINUS</scope>
    <scope>FUNCTION</scope>
    <scope>SUBUNIT</scope>
</reference>
<reference key="2">
    <citation type="journal article" date="2003" name="J. Mol. Biol.">
        <title>Glucocorticoid receptor-like Zn(Cys)4 motifs in BslI restriction endonuclease.</title>
        <authorList>
            <person name="Scheuring Vanamee E."/>
            <person name="Hsieh P.-C."/>
            <person name="Zhu Z."/>
            <person name="Yates D."/>
            <person name="Garman E."/>
            <person name="Xu S.-Y."/>
            <person name="Aggarwal A.K."/>
        </authorList>
    </citation>
    <scope>ZINC-BINDING</scope>
    <scope>ABSORPTION SPECTROSCOPY</scope>
    <scope>MUTAGENESIS OF CYS-62; HIS-66; CYS-79 AND CYS-82</scope>
    <source>
        <strain>NEB-606</strain>
    </source>
</reference>
<reference key="3">
    <citation type="journal article" date="2003" name="Nucleic Acids Res.">
        <title>A nomenclature for restriction enzymes, DNA methyltransferases, homing endonucleases and their genes.</title>
        <authorList>
            <person name="Roberts R.J."/>
            <person name="Belfort M."/>
            <person name="Bestor T."/>
            <person name="Bhagwat A.S."/>
            <person name="Bickle T.A."/>
            <person name="Bitinaite J."/>
            <person name="Blumenthal R.M."/>
            <person name="Degtyarev S.K."/>
            <person name="Dryden D.T."/>
            <person name="Dybvig K."/>
            <person name="Firman K."/>
            <person name="Gromova E.S."/>
            <person name="Gumport R.I."/>
            <person name="Halford S.E."/>
            <person name="Hattman S."/>
            <person name="Heitman J."/>
            <person name="Hornby D.P."/>
            <person name="Janulaitis A."/>
            <person name="Jeltsch A."/>
            <person name="Josephsen J."/>
            <person name="Kiss A."/>
            <person name="Klaenhammer T.R."/>
            <person name="Kobayashi I."/>
            <person name="Kong H."/>
            <person name="Krueger D.H."/>
            <person name="Lacks S."/>
            <person name="Marinus M.G."/>
            <person name="Miyahara M."/>
            <person name="Morgan R.D."/>
            <person name="Murray N.E."/>
            <person name="Nagaraja V."/>
            <person name="Piekarowicz A."/>
            <person name="Pingoud A."/>
            <person name="Raleigh E."/>
            <person name="Rao D.N."/>
            <person name="Reich N."/>
            <person name="Repin V.E."/>
            <person name="Selker E.U."/>
            <person name="Shaw P.C."/>
            <person name="Stein D.C."/>
            <person name="Stoddard B.L."/>
            <person name="Szybalski W."/>
            <person name="Trautner T.A."/>
            <person name="Van Etten J.L."/>
            <person name="Vitor J.M."/>
            <person name="Wilson G.G."/>
            <person name="Xu S.Y."/>
        </authorList>
    </citation>
    <scope>NOMENCLATURE</scope>
    <scope>SUBTYPE</scope>
</reference>
<protein>
    <recommendedName>
        <fullName evidence="4">Type II restriction enzyme BslI subunit beta</fullName>
        <shortName>R.BslIbeta</shortName>
        <ecNumber evidence="1">3.1.21.4</ecNumber>
    </recommendedName>
    <alternativeName>
        <fullName>Endonuclease BslI subunit beta</fullName>
    </alternativeName>
    <alternativeName>
        <fullName>Type IIT restriction enzyme BslI subunit beta</fullName>
    </alternativeName>
    <alternativeName>
        <fullName>Type-2 restriction enzyme BslI subunit beta</fullName>
    </alternativeName>
</protein>
<proteinExistence type="evidence at protein level"/>